<name>DDL_RICCK</name>
<reference key="1">
    <citation type="submission" date="2007-09" db="EMBL/GenBank/DDBJ databases">
        <title>Complete genome sequence of Rickettsia canadensis.</title>
        <authorList>
            <person name="Madan A."/>
            <person name="Fahey J."/>
            <person name="Helton E."/>
            <person name="Ketteman M."/>
            <person name="Madan A."/>
            <person name="Rodrigues S."/>
            <person name="Sanchez A."/>
            <person name="Whiting M."/>
            <person name="Dasch G."/>
            <person name="Eremeeva M."/>
        </authorList>
    </citation>
    <scope>NUCLEOTIDE SEQUENCE [LARGE SCALE GENOMIC DNA]</scope>
    <source>
        <strain>McKiel</strain>
    </source>
</reference>
<protein>
    <recommendedName>
        <fullName evidence="2">D-alanine--D-alanine ligase</fullName>
        <ecNumber evidence="2">6.3.2.4</ecNumber>
    </recommendedName>
    <alternativeName>
        <fullName evidence="2">D-Ala-D-Ala ligase</fullName>
    </alternativeName>
    <alternativeName>
        <fullName evidence="2">D-alanylalanine synthetase</fullName>
    </alternativeName>
</protein>
<gene>
    <name evidence="2" type="primary">ddl</name>
    <name type="ordered locus">A1E_01430</name>
</gene>
<accession>A8EXZ8</accession>
<comment type="function">
    <text evidence="2">Cell wall formation.</text>
</comment>
<comment type="catalytic activity">
    <reaction evidence="2">
        <text>2 D-alanine + ATP = D-alanyl-D-alanine + ADP + phosphate + H(+)</text>
        <dbReference type="Rhea" id="RHEA:11224"/>
        <dbReference type="ChEBI" id="CHEBI:15378"/>
        <dbReference type="ChEBI" id="CHEBI:30616"/>
        <dbReference type="ChEBI" id="CHEBI:43474"/>
        <dbReference type="ChEBI" id="CHEBI:57416"/>
        <dbReference type="ChEBI" id="CHEBI:57822"/>
        <dbReference type="ChEBI" id="CHEBI:456216"/>
        <dbReference type="EC" id="6.3.2.4"/>
    </reaction>
</comment>
<comment type="cofactor">
    <cofactor evidence="1">
        <name>Mg(2+)</name>
        <dbReference type="ChEBI" id="CHEBI:18420"/>
    </cofactor>
    <cofactor evidence="1">
        <name>Mn(2+)</name>
        <dbReference type="ChEBI" id="CHEBI:29035"/>
    </cofactor>
    <text evidence="1">Binds 2 magnesium or manganese ions per subunit.</text>
</comment>
<comment type="pathway">
    <text evidence="2">Cell wall biogenesis; peptidoglycan biosynthesis.</text>
</comment>
<comment type="subcellular location">
    <subcellularLocation>
        <location evidence="2">Cytoplasm</location>
    </subcellularLocation>
</comment>
<comment type="similarity">
    <text evidence="2">Belongs to the D-alanine--D-alanine ligase family.</text>
</comment>
<proteinExistence type="inferred from homology"/>
<organism>
    <name type="scientific">Rickettsia canadensis (strain McKiel)</name>
    <dbReference type="NCBI Taxonomy" id="293613"/>
    <lineage>
        <taxon>Bacteria</taxon>
        <taxon>Pseudomonadati</taxon>
        <taxon>Pseudomonadota</taxon>
        <taxon>Alphaproteobacteria</taxon>
        <taxon>Rickettsiales</taxon>
        <taxon>Rickettsiaceae</taxon>
        <taxon>Rickettsieae</taxon>
        <taxon>Rickettsia</taxon>
        <taxon>belli group</taxon>
    </lineage>
</organism>
<feature type="chain" id="PRO_1000074781" description="D-alanine--D-alanine ligase">
    <location>
        <begin position="1"/>
        <end position="354"/>
    </location>
</feature>
<feature type="domain" description="ATP-grasp" evidence="2">
    <location>
        <begin position="154"/>
        <end position="348"/>
    </location>
</feature>
<feature type="binding site" evidence="2">
    <location>
        <begin position="181"/>
        <end position="232"/>
    </location>
    <ligand>
        <name>ATP</name>
        <dbReference type="ChEBI" id="CHEBI:30616"/>
    </ligand>
</feature>
<feature type="binding site" evidence="2">
    <location>
        <position position="301"/>
    </location>
    <ligand>
        <name>Mg(2+)</name>
        <dbReference type="ChEBI" id="CHEBI:18420"/>
        <label>1</label>
    </ligand>
</feature>
<feature type="binding site" evidence="2">
    <location>
        <position position="315"/>
    </location>
    <ligand>
        <name>Mg(2+)</name>
        <dbReference type="ChEBI" id="CHEBI:18420"/>
        <label>1</label>
    </ligand>
</feature>
<feature type="binding site" evidence="2">
    <location>
        <position position="315"/>
    </location>
    <ligand>
        <name>Mg(2+)</name>
        <dbReference type="ChEBI" id="CHEBI:18420"/>
        <label>2</label>
    </ligand>
</feature>
<feature type="binding site" evidence="2">
    <location>
        <position position="317"/>
    </location>
    <ligand>
        <name>Mg(2+)</name>
        <dbReference type="ChEBI" id="CHEBI:18420"/>
        <label>2</label>
    </ligand>
</feature>
<evidence type="ECO:0000250" key="1"/>
<evidence type="ECO:0000255" key="2">
    <source>
        <dbReference type="HAMAP-Rule" id="MF_00047"/>
    </source>
</evidence>
<sequence length="354" mass="39848">MHQYQIHWVEHSEVKILSNIVVRLEYKERGVKSITNRRARHDAVSESKSIDYSGKKHIALVAGGMSAEREVSLVSSKGVSKALIALGYKVTFIDMGADIAFKLQEIKPDIVFNCLHGTYGEDGCLSGLLNIMRIPYTHSGVLSSALAFDKIYSRSWFLTNNINMAESIVVNKSDNIKIEPMKRPYVIKPITQGSSIGIEVIFEEDDFNFANYDFPYGDQVIIEKYIKGRELQVAVLNGKALGVLEIKLLKNRFYDYETKYTEGFAEHLCPAPIPTNLYDKLLIESEKIYKTMNCKGPARVEFLLEDQTNKLYALEINTHPGMTPLSIVPEIAAYAGINFTNLIEEIIKAASFES</sequence>
<dbReference type="EC" id="6.3.2.4" evidence="2"/>
<dbReference type="EMBL" id="CP000409">
    <property type="protein sequence ID" value="ABV73231.1"/>
    <property type="molecule type" value="Genomic_DNA"/>
</dbReference>
<dbReference type="RefSeq" id="WP_012148430.1">
    <property type="nucleotide sequence ID" value="NC_009879.1"/>
</dbReference>
<dbReference type="SMR" id="A8EXZ8"/>
<dbReference type="STRING" id="293613.A1E_01430"/>
<dbReference type="KEGG" id="rcm:A1E_01430"/>
<dbReference type="eggNOG" id="COG1181">
    <property type="taxonomic scope" value="Bacteria"/>
</dbReference>
<dbReference type="HOGENOM" id="CLU_039268_1_1_5"/>
<dbReference type="UniPathway" id="UPA00219"/>
<dbReference type="Proteomes" id="UP000007056">
    <property type="component" value="Chromosome"/>
</dbReference>
<dbReference type="GO" id="GO:0005737">
    <property type="term" value="C:cytoplasm"/>
    <property type="evidence" value="ECO:0007669"/>
    <property type="project" value="UniProtKB-SubCell"/>
</dbReference>
<dbReference type="GO" id="GO:0005524">
    <property type="term" value="F:ATP binding"/>
    <property type="evidence" value="ECO:0007669"/>
    <property type="project" value="UniProtKB-KW"/>
</dbReference>
<dbReference type="GO" id="GO:0008716">
    <property type="term" value="F:D-alanine-D-alanine ligase activity"/>
    <property type="evidence" value="ECO:0007669"/>
    <property type="project" value="UniProtKB-UniRule"/>
</dbReference>
<dbReference type="GO" id="GO:0046872">
    <property type="term" value="F:metal ion binding"/>
    <property type="evidence" value="ECO:0007669"/>
    <property type="project" value="UniProtKB-KW"/>
</dbReference>
<dbReference type="GO" id="GO:0071555">
    <property type="term" value="P:cell wall organization"/>
    <property type="evidence" value="ECO:0007669"/>
    <property type="project" value="UniProtKB-KW"/>
</dbReference>
<dbReference type="GO" id="GO:0009252">
    <property type="term" value="P:peptidoglycan biosynthetic process"/>
    <property type="evidence" value="ECO:0007669"/>
    <property type="project" value="UniProtKB-UniRule"/>
</dbReference>
<dbReference type="GO" id="GO:0008360">
    <property type="term" value="P:regulation of cell shape"/>
    <property type="evidence" value="ECO:0007669"/>
    <property type="project" value="UniProtKB-KW"/>
</dbReference>
<dbReference type="Gene3D" id="3.40.50.20">
    <property type="match status" value="1"/>
</dbReference>
<dbReference type="Gene3D" id="3.30.1490.20">
    <property type="entry name" value="ATP-grasp fold, A domain"/>
    <property type="match status" value="1"/>
</dbReference>
<dbReference type="Gene3D" id="3.30.470.20">
    <property type="entry name" value="ATP-grasp fold, B domain"/>
    <property type="match status" value="1"/>
</dbReference>
<dbReference type="HAMAP" id="MF_00047">
    <property type="entry name" value="Dala_Dala_lig"/>
    <property type="match status" value="1"/>
</dbReference>
<dbReference type="InterPro" id="IPR011761">
    <property type="entry name" value="ATP-grasp"/>
</dbReference>
<dbReference type="InterPro" id="IPR013815">
    <property type="entry name" value="ATP_grasp_subdomain_1"/>
</dbReference>
<dbReference type="InterPro" id="IPR000291">
    <property type="entry name" value="D-Ala_lig_Van_CS"/>
</dbReference>
<dbReference type="InterPro" id="IPR005905">
    <property type="entry name" value="D_ala_D_ala"/>
</dbReference>
<dbReference type="InterPro" id="IPR011095">
    <property type="entry name" value="Dala_Dala_lig_C"/>
</dbReference>
<dbReference type="InterPro" id="IPR011127">
    <property type="entry name" value="Dala_Dala_lig_N"/>
</dbReference>
<dbReference type="InterPro" id="IPR016185">
    <property type="entry name" value="PreATP-grasp_dom_sf"/>
</dbReference>
<dbReference type="InterPro" id="IPR022436">
    <property type="entry name" value="RPE2"/>
</dbReference>
<dbReference type="NCBIfam" id="TIGR01205">
    <property type="entry name" value="D_ala_D_alaTIGR"/>
    <property type="match status" value="1"/>
</dbReference>
<dbReference type="NCBIfam" id="NF002378">
    <property type="entry name" value="PRK01372.1"/>
    <property type="match status" value="1"/>
</dbReference>
<dbReference type="NCBIfam" id="TIGR03774">
    <property type="entry name" value="RPE2"/>
    <property type="match status" value="1"/>
</dbReference>
<dbReference type="PANTHER" id="PTHR23132">
    <property type="entry name" value="D-ALANINE--D-ALANINE LIGASE"/>
    <property type="match status" value="1"/>
</dbReference>
<dbReference type="PANTHER" id="PTHR23132:SF23">
    <property type="entry name" value="D-ALANINE--D-ALANINE LIGASE B"/>
    <property type="match status" value="1"/>
</dbReference>
<dbReference type="Pfam" id="PF07478">
    <property type="entry name" value="Dala_Dala_lig_C"/>
    <property type="match status" value="1"/>
</dbReference>
<dbReference type="Pfam" id="PF01820">
    <property type="entry name" value="Dala_Dala_lig_N"/>
    <property type="match status" value="1"/>
</dbReference>
<dbReference type="PIRSF" id="PIRSF039102">
    <property type="entry name" value="Ddl/VanB"/>
    <property type="match status" value="1"/>
</dbReference>
<dbReference type="SUPFAM" id="SSF56059">
    <property type="entry name" value="Glutathione synthetase ATP-binding domain-like"/>
    <property type="match status" value="1"/>
</dbReference>
<dbReference type="SUPFAM" id="SSF52440">
    <property type="entry name" value="PreATP-grasp domain"/>
    <property type="match status" value="1"/>
</dbReference>
<dbReference type="PROSITE" id="PS50975">
    <property type="entry name" value="ATP_GRASP"/>
    <property type="match status" value="1"/>
</dbReference>
<dbReference type="PROSITE" id="PS00843">
    <property type="entry name" value="DALA_DALA_LIGASE_1"/>
    <property type="match status" value="1"/>
</dbReference>
<dbReference type="PROSITE" id="PS00844">
    <property type="entry name" value="DALA_DALA_LIGASE_2"/>
    <property type="match status" value="1"/>
</dbReference>
<keyword id="KW-0067">ATP-binding</keyword>
<keyword id="KW-0133">Cell shape</keyword>
<keyword id="KW-0961">Cell wall biogenesis/degradation</keyword>
<keyword id="KW-0963">Cytoplasm</keyword>
<keyword id="KW-0436">Ligase</keyword>
<keyword id="KW-0460">Magnesium</keyword>
<keyword id="KW-0464">Manganese</keyword>
<keyword id="KW-0479">Metal-binding</keyword>
<keyword id="KW-0547">Nucleotide-binding</keyword>
<keyword id="KW-0573">Peptidoglycan synthesis</keyword>